<proteinExistence type="inferred from homology"/>
<feature type="chain" id="PRO_1000139138" description="Uracil phosphoribosyltransferase">
    <location>
        <begin position="1"/>
        <end position="211"/>
    </location>
</feature>
<feature type="binding site" evidence="1">
    <location>
        <position position="79"/>
    </location>
    <ligand>
        <name>5-phospho-alpha-D-ribose 1-diphosphate</name>
        <dbReference type="ChEBI" id="CHEBI:58017"/>
    </ligand>
</feature>
<feature type="binding site" evidence="1">
    <location>
        <position position="104"/>
    </location>
    <ligand>
        <name>5-phospho-alpha-D-ribose 1-diphosphate</name>
        <dbReference type="ChEBI" id="CHEBI:58017"/>
    </ligand>
</feature>
<feature type="binding site" evidence="1">
    <location>
        <begin position="131"/>
        <end position="139"/>
    </location>
    <ligand>
        <name>5-phospho-alpha-D-ribose 1-diphosphate</name>
        <dbReference type="ChEBI" id="CHEBI:58017"/>
    </ligand>
</feature>
<feature type="binding site" evidence="1">
    <location>
        <position position="196"/>
    </location>
    <ligand>
        <name>uracil</name>
        <dbReference type="ChEBI" id="CHEBI:17568"/>
    </ligand>
</feature>
<feature type="binding site" evidence="1">
    <location>
        <begin position="201"/>
        <end position="203"/>
    </location>
    <ligand>
        <name>uracil</name>
        <dbReference type="ChEBI" id="CHEBI:17568"/>
    </ligand>
</feature>
<feature type="binding site" evidence="1">
    <location>
        <position position="202"/>
    </location>
    <ligand>
        <name>5-phospho-alpha-D-ribose 1-diphosphate</name>
        <dbReference type="ChEBI" id="CHEBI:58017"/>
    </ligand>
</feature>
<sequence length="211" mass="23317">MGKFEVLDHPLIQHKLTMIRDKNVGTKFFRETVKEISTLMAYEVARDMPLKDVEIETPIAKTTQKELAGKKVAIIPILRAGIGMVDGMTDLIPAAKIGFIGMYRDEETLKPHEYFVKLPNDITERQLFIVDPMLATGGSAMMAIEALKKRGCSEKNMKFACLVAAPEGVKAVRDAYPDVDIYTAGLDDHLNEDGYIVPGLGDAGDRLFGTK</sequence>
<dbReference type="EC" id="2.4.2.9" evidence="1"/>
<dbReference type="EMBL" id="AP007281">
    <property type="protein sequence ID" value="BAG24962.1"/>
    <property type="molecule type" value="Genomic_DNA"/>
</dbReference>
<dbReference type="RefSeq" id="WP_003676152.1">
    <property type="nucleotide sequence ID" value="NC_010609.1"/>
</dbReference>
<dbReference type="SMR" id="B2G680"/>
<dbReference type="GeneID" id="77192089"/>
<dbReference type="KEGG" id="lrf:LAR_0446"/>
<dbReference type="HOGENOM" id="CLU_067096_2_2_9"/>
<dbReference type="UniPathway" id="UPA00574">
    <property type="reaction ID" value="UER00636"/>
</dbReference>
<dbReference type="GO" id="GO:0005525">
    <property type="term" value="F:GTP binding"/>
    <property type="evidence" value="ECO:0007669"/>
    <property type="project" value="UniProtKB-KW"/>
</dbReference>
<dbReference type="GO" id="GO:0000287">
    <property type="term" value="F:magnesium ion binding"/>
    <property type="evidence" value="ECO:0007669"/>
    <property type="project" value="UniProtKB-UniRule"/>
</dbReference>
<dbReference type="GO" id="GO:0004845">
    <property type="term" value="F:uracil phosphoribosyltransferase activity"/>
    <property type="evidence" value="ECO:0007669"/>
    <property type="project" value="UniProtKB-UniRule"/>
</dbReference>
<dbReference type="GO" id="GO:0044206">
    <property type="term" value="P:UMP salvage"/>
    <property type="evidence" value="ECO:0007669"/>
    <property type="project" value="UniProtKB-UniRule"/>
</dbReference>
<dbReference type="GO" id="GO:0006223">
    <property type="term" value="P:uracil salvage"/>
    <property type="evidence" value="ECO:0007669"/>
    <property type="project" value="InterPro"/>
</dbReference>
<dbReference type="CDD" id="cd06223">
    <property type="entry name" value="PRTases_typeI"/>
    <property type="match status" value="1"/>
</dbReference>
<dbReference type="FunFam" id="3.40.50.2020:FF:000003">
    <property type="entry name" value="Uracil phosphoribosyltransferase"/>
    <property type="match status" value="1"/>
</dbReference>
<dbReference type="Gene3D" id="3.40.50.2020">
    <property type="match status" value="1"/>
</dbReference>
<dbReference type="HAMAP" id="MF_01218_B">
    <property type="entry name" value="Upp_B"/>
    <property type="match status" value="1"/>
</dbReference>
<dbReference type="InterPro" id="IPR000836">
    <property type="entry name" value="PRibTrfase_dom"/>
</dbReference>
<dbReference type="InterPro" id="IPR029057">
    <property type="entry name" value="PRTase-like"/>
</dbReference>
<dbReference type="InterPro" id="IPR034332">
    <property type="entry name" value="Upp_B"/>
</dbReference>
<dbReference type="InterPro" id="IPR050054">
    <property type="entry name" value="UPRTase/APRTase"/>
</dbReference>
<dbReference type="InterPro" id="IPR005765">
    <property type="entry name" value="Ura_phspho_trans"/>
</dbReference>
<dbReference type="NCBIfam" id="NF001097">
    <property type="entry name" value="PRK00129.1"/>
    <property type="match status" value="1"/>
</dbReference>
<dbReference type="NCBIfam" id="TIGR01091">
    <property type="entry name" value="upp"/>
    <property type="match status" value="1"/>
</dbReference>
<dbReference type="PANTHER" id="PTHR32315">
    <property type="entry name" value="ADENINE PHOSPHORIBOSYLTRANSFERASE"/>
    <property type="match status" value="1"/>
</dbReference>
<dbReference type="PANTHER" id="PTHR32315:SF4">
    <property type="entry name" value="URACIL PHOSPHORIBOSYLTRANSFERASE, CHLOROPLASTIC"/>
    <property type="match status" value="1"/>
</dbReference>
<dbReference type="Pfam" id="PF14681">
    <property type="entry name" value="UPRTase"/>
    <property type="match status" value="1"/>
</dbReference>
<dbReference type="SUPFAM" id="SSF53271">
    <property type="entry name" value="PRTase-like"/>
    <property type="match status" value="1"/>
</dbReference>
<organism>
    <name type="scientific">Limosilactobacillus reuteri subsp. reuteri (strain JCM 1112)</name>
    <name type="common">Lactobacillus reuteri</name>
    <dbReference type="NCBI Taxonomy" id="557433"/>
    <lineage>
        <taxon>Bacteria</taxon>
        <taxon>Bacillati</taxon>
        <taxon>Bacillota</taxon>
        <taxon>Bacilli</taxon>
        <taxon>Lactobacillales</taxon>
        <taxon>Lactobacillaceae</taxon>
        <taxon>Limosilactobacillus</taxon>
    </lineage>
</organism>
<keyword id="KW-0021">Allosteric enzyme</keyword>
<keyword id="KW-0328">Glycosyltransferase</keyword>
<keyword id="KW-0342">GTP-binding</keyword>
<keyword id="KW-0460">Magnesium</keyword>
<keyword id="KW-0547">Nucleotide-binding</keyword>
<keyword id="KW-0808">Transferase</keyword>
<comment type="function">
    <text evidence="1">Catalyzes the conversion of uracil and 5-phospho-alpha-D-ribose 1-diphosphate (PRPP) to UMP and diphosphate.</text>
</comment>
<comment type="catalytic activity">
    <reaction evidence="1">
        <text>UMP + diphosphate = 5-phospho-alpha-D-ribose 1-diphosphate + uracil</text>
        <dbReference type="Rhea" id="RHEA:13017"/>
        <dbReference type="ChEBI" id="CHEBI:17568"/>
        <dbReference type="ChEBI" id="CHEBI:33019"/>
        <dbReference type="ChEBI" id="CHEBI:57865"/>
        <dbReference type="ChEBI" id="CHEBI:58017"/>
        <dbReference type="EC" id="2.4.2.9"/>
    </reaction>
</comment>
<comment type="cofactor">
    <cofactor evidence="1">
        <name>Mg(2+)</name>
        <dbReference type="ChEBI" id="CHEBI:18420"/>
    </cofactor>
    <text evidence="1">Binds 1 Mg(2+) ion per subunit. The magnesium is bound as Mg-PRPP.</text>
</comment>
<comment type="activity regulation">
    <text evidence="1">Allosterically activated by GTP.</text>
</comment>
<comment type="pathway">
    <text evidence="1">Pyrimidine metabolism; UMP biosynthesis via salvage pathway; UMP from uracil: step 1/1.</text>
</comment>
<comment type="similarity">
    <text evidence="1">Belongs to the UPRTase family.</text>
</comment>
<evidence type="ECO:0000255" key="1">
    <source>
        <dbReference type="HAMAP-Rule" id="MF_01218"/>
    </source>
</evidence>
<name>UPP_LIMRJ</name>
<gene>
    <name evidence="1" type="primary">upp</name>
    <name type="ordered locus">LAR_0446</name>
</gene>
<reference key="1">
    <citation type="journal article" date="2008" name="DNA Res.">
        <title>Comparative genome analysis of Lactobacillus reuteri and Lactobacillus fermentum reveal a genomic island for reuterin and cobalamin production.</title>
        <authorList>
            <person name="Morita H."/>
            <person name="Toh H."/>
            <person name="Fukuda S."/>
            <person name="Horikawa H."/>
            <person name="Oshima K."/>
            <person name="Suzuki T."/>
            <person name="Murakami M."/>
            <person name="Hisamatsu S."/>
            <person name="Kato Y."/>
            <person name="Takizawa T."/>
            <person name="Fukuoka H."/>
            <person name="Yoshimura T."/>
            <person name="Itoh K."/>
            <person name="O'Sullivan D.J."/>
            <person name="McKay L.L."/>
            <person name="Ohno H."/>
            <person name="Kikuchi J."/>
            <person name="Masaoka T."/>
            <person name="Hattori M."/>
        </authorList>
    </citation>
    <scope>NUCLEOTIDE SEQUENCE [LARGE SCALE GENOMIC DNA]</scope>
    <source>
        <strain>JCM 1112</strain>
    </source>
</reference>
<protein>
    <recommendedName>
        <fullName evidence="1">Uracil phosphoribosyltransferase</fullName>
        <ecNumber evidence="1">2.4.2.9</ecNumber>
    </recommendedName>
    <alternativeName>
        <fullName evidence="1">UMP pyrophosphorylase</fullName>
    </alternativeName>
    <alternativeName>
        <fullName evidence="1">UPRTase</fullName>
    </alternativeName>
</protein>
<accession>B2G680</accession>